<gene>
    <name evidence="3" type="primary">acpT</name>
    <name type="synonym">yhhU</name>
    <name type="ordered locus">b3475</name>
    <name type="ordered locus">JW3440</name>
</gene>
<name>ACPT_ECOLI</name>
<proteinExistence type="inferred from homology"/>
<accession>P37623</accession>
<accession>Q2M7D8</accession>
<keyword id="KW-1185">Reference proteome</keyword>
<keyword id="KW-0808">Transferase</keyword>
<reference key="1">
    <citation type="journal article" date="1994" name="Nucleic Acids Res.">
        <title>Analysis of the Escherichia coli genome. V. DNA sequence of the region from 76.0 to 81.5 minutes.</title>
        <authorList>
            <person name="Sofia H.J."/>
            <person name="Burland V."/>
            <person name="Daniels D.L."/>
            <person name="Plunkett G. III"/>
            <person name="Blattner F.R."/>
        </authorList>
    </citation>
    <scope>NUCLEOTIDE SEQUENCE [LARGE SCALE GENOMIC DNA]</scope>
    <source>
        <strain>K12 / MG1655 / ATCC 47076</strain>
    </source>
</reference>
<reference key="2">
    <citation type="journal article" date="1997" name="Science">
        <title>The complete genome sequence of Escherichia coli K-12.</title>
        <authorList>
            <person name="Blattner F.R."/>
            <person name="Plunkett G. III"/>
            <person name="Bloch C.A."/>
            <person name="Perna N.T."/>
            <person name="Burland V."/>
            <person name="Riley M."/>
            <person name="Collado-Vides J."/>
            <person name="Glasner J.D."/>
            <person name="Rode C.K."/>
            <person name="Mayhew G.F."/>
            <person name="Gregor J."/>
            <person name="Davis N.W."/>
            <person name="Kirkpatrick H.A."/>
            <person name="Goeden M.A."/>
            <person name="Rose D.J."/>
            <person name="Mau B."/>
            <person name="Shao Y."/>
        </authorList>
    </citation>
    <scope>NUCLEOTIDE SEQUENCE [LARGE SCALE GENOMIC DNA]</scope>
    <source>
        <strain>K12 / MG1655 / ATCC 47076</strain>
    </source>
</reference>
<reference key="3">
    <citation type="journal article" date="2006" name="Mol. Syst. Biol.">
        <title>Highly accurate genome sequences of Escherichia coli K-12 strains MG1655 and W3110.</title>
        <authorList>
            <person name="Hayashi K."/>
            <person name="Morooka N."/>
            <person name="Yamamoto Y."/>
            <person name="Fujita K."/>
            <person name="Isono K."/>
            <person name="Choi S."/>
            <person name="Ohtsubo E."/>
            <person name="Baba T."/>
            <person name="Wanner B.L."/>
            <person name="Mori H."/>
            <person name="Horiuchi T."/>
        </authorList>
    </citation>
    <scope>NUCLEOTIDE SEQUENCE [LARGE SCALE GENOMIC DNA]</scope>
    <source>
        <strain>K12 / W3110 / ATCC 27325 / DSM 5911</strain>
    </source>
</reference>
<reference key="4">
    <citation type="journal article" date="1996" name="Chem. Biol.">
        <title>A new enzyme superfamily -- the phosphopantetheinyl transferases.</title>
        <authorList>
            <person name="Lambalot R.H."/>
            <person name="Gehring A.M."/>
            <person name="Flugel R.S."/>
            <person name="Zuber P."/>
            <person name="LaCelle M."/>
            <person name="Marahiel M.A."/>
            <person name="Reid R."/>
            <person name="Khosla C."/>
            <person name="Walsh C.T."/>
        </authorList>
    </citation>
    <scope>FUNCTION</scope>
</reference>
<reference key="5">
    <citation type="journal article" date="2000" name="J. Biol. Chem.">
        <title>Holo-(acyl carrier protein) synthase and phosphopantetheinyl transfer in Escherichia coli.</title>
        <authorList>
            <person name="Flugel R.S."/>
            <person name="Hwangbo Y."/>
            <person name="Lambalot R.H."/>
            <person name="Cronan J.E. Jr."/>
            <person name="Walsh C.T."/>
        </authorList>
    </citation>
    <scope>FUNCTION</scope>
    <source>
        <strain>K12 / W3110 / ATCC 27325 / DSM 5911</strain>
    </source>
</reference>
<sequence length="195" mass="21768">MYRIVLGKVSTLSAAPLPPGLREQAPQGPRRERWLAGRALLSHTLSPLPEIIYGEQGKPAFAPEMPLWFNLSHSGDDIALLLSDEGEVGCDIEVIRPRANWRWLANAVFSLGEHAEMDAVHPDQQLEMFWRIWTRKEAIVKQRGGSAWQIVSVDSTYHSSLSVSHCQLENLSLAICTPTPFTLTADSVQWIDSVN</sequence>
<organism>
    <name type="scientific">Escherichia coli (strain K12)</name>
    <dbReference type="NCBI Taxonomy" id="83333"/>
    <lineage>
        <taxon>Bacteria</taxon>
        <taxon>Pseudomonadati</taxon>
        <taxon>Pseudomonadota</taxon>
        <taxon>Gammaproteobacteria</taxon>
        <taxon>Enterobacterales</taxon>
        <taxon>Enterobacteriaceae</taxon>
        <taxon>Escherichia</taxon>
    </lineage>
</organism>
<evidence type="ECO:0000269" key="1">
    <source>
    </source>
</evidence>
<evidence type="ECO:0000269" key="2">
    <source>
    </source>
</evidence>
<evidence type="ECO:0000303" key="3">
    <source>
    </source>
</evidence>
<evidence type="ECO:0000305" key="4"/>
<evidence type="ECO:0000305" key="5">
    <source>
    </source>
</evidence>
<feature type="chain" id="PRO_0000206081" description="4'-phosphopantetheinyl transferase AcpT">
    <location>
        <begin position="1"/>
        <end position="195"/>
    </location>
</feature>
<protein>
    <recommendedName>
        <fullName>4'-phosphopantetheinyl transferase AcpT</fullName>
        <ecNumber evidence="5">2.7.8.7</ecNumber>
    </recommendedName>
</protein>
<dbReference type="EC" id="2.7.8.7" evidence="5"/>
<dbReference type="EMBL" id="U00039">
    <property type="protein sequence ID" value="AAB18450.1"/>
    <property type="molecule type" value="Genomic_DNA"/>
</dbReference>
<dbReference type="EMBL" id="U00096">
    <property type="protein sequence ID" value="AAC76500.1"/>
    <property type="molecule type" value="Genomic_DNA"/>
</dbReference>
<dbReference type="EMBL" id="AP009048">
    <property type="protein sequence ID" value="BAE77818.1"/>
    <property type="molecule type" value="Genomic_DNA"/>
</dbReference>
<dbReference type="PIR" id="S47694">
    <property type="entry name" value="S47694"/>
</dbReference>
<dbReference type="RefSeq" id="NP_417932.1">
    <property type="nucleotide sequence ID" value="NC_000913.3"/>
</dbReference>
<dbReference type="RefSeq" id="WP_000285774.1">
    <property type="nucleotide sequence ID" value="NZ_SSZK01000008.1"/>
</dbReference>
<dbReference type="SMR" id="P37623"/>
<dbReference type="BioGRID" id="4259300">
    <property type="interactions" value="100"/>
</dbReference>
<dbReference type="DIP" id="DIP-12355N"/>
<dbReference type="FunCoup" id="P37623">
    <property type="interactions" value="54"/>
</dbReference>
<dbReference type="IntAct" id="P37623">
    <property type="interactions" value="1"/>
</dbReference>
<dbReference type="STRING" id="511145.b3475"/>
<dbReference type="jPOST" id="P37623"/>
<dbReference type="PaxDb" id="511145-b3475"/>
<dbReference type="EnsemblBacteria" id="AAC76500">
    <property type="protein sequence ID" value="AAC76500"/>
    <property type="gene ID" value="b3475"/>
</dbReference>
<dbReference type="GeneID" id="947979"/>
<dbReference type="KEGG" id="ecj:JW3440"/>
<dbReference type="KEGG" id="eco:b3475"/>
<dbReference type="KEGG" id="ecoc:C3026_18820"/>
<dbReference type="PATRIC" id="fig|1411691.4.peg.3250"/>
<dbReference type="EchoBASE" id="EB2135"/>
<dbReference type="eggNOG" id="COG2091">
    <property type="taxonomic scope" value="Bacteria"/>
</dbReference>
<dbReference type="HOGENOM" id="CLU_119926_0_0_6"/>
<dbReference type="InParanoid" id="P37623"/>
<dbReference type="OMA" id="WQIVSID"/>
<dbReference type="OrthoDB" id="9808281at2"/>
<dbReference type="PhylomeDB" id="P37623"/>
<dbReference type="BioCyc" id="EcoCyc:EG12221-MONOMER"/>
<dbReference type="BioCyc" id="MetaCyc:EG12221-MONOMER"/>
<dbReference type="PRO" id="PR:P37623"/>
<dbReference type="Proteomes" id="UP000000625">
    <property type="component" value="Chromosome"/>
</dbReference>
<dbReference type="GO" id="GO:0005829">
    <property type="term" value="C:cytosol"/>
    <property type="evidence" value="ECO:0000318"/>
    <property type="project" value="GO_Central"/>
</dbReference>
<dbReference type="GO" id="GO:0008897">
    <property type="term" value="F:holo-[acyl-carrier-protein] synthase activity"/>
    <property type="evidence" value="ECO:0000314"/>
    <property type="project" value="EcoliWiki"/>
</dbReference>
<dbReference type="GO" id="GO:0000287">
    <property type="term" value="F:magnesium ion binding"/>
    <property type="evidence" value="ECO:0007669"/>
    <property type="project" value="InterPro"/>
</dbReference>
<dbReference type="GO" id="GO:0006633">
    <property type="term" value="P:fatty acid biosynthetic process"/>
    <property type="evidence" value="ECO:0000316"/>
    <property type="project" value="EcoliWiki"/>
</dbReference>
<dbReference type="GO" id="GO:0019878">
    <property type="term" value="P:lysine biosynthetic process via aminoadipic acid"/>
    <property type="evidence" value="ECO:0000318"/>
    <property type="project" value="GO_Central"/>
</dbReference>
<dbReference type="FunFam" id="3.90.470.20:FF:000002">
    <property type="entry name" value="Holo-(Acyl carrier protein) synthase 2"/>
    <property type="match status" value="1"/>
</dbReference>
<dbReference type="FunFam" id="3.90.470.20:FF:000004">
    <property type="entry name" value="Holo-(Acyl carrier protein) synthase 2"/>
    <property type="match status" value="1"/>
</dbReference>
<dbReference type="Gene3D" id="3.90.470.20">
    <property type="entry name" value="4'-phosphopantetheinyl transferase domain"/>
    <property type="match status" value="1"/>
</dbReference>
<dbReference type="InterPro" id="IPR008278">
    <property type="entry name" value="4-PPantetheinyl_Trfase_dom"/>
</dbReference>
<dbReference type="InterPro" id="IPR037143">
    <property type="entry name" value="4-PPantetheinyl_Trfase_dom_sf"/>
</dbReference>
<dbReference type="InterPro" id="IPR050559">
    <property type="entry name" value="P-Pant_transferase_sf"/>
</dbReference>
<dbReference type="NCBIfam" id="NF007676">
    <property type="entry name" value="PRK10351.1"/>
    <property type="match status" value="1"/>
</dbReference>
<dbReference type="PANTHER" id="PTHR12215:SF10">
    <property type="entry name" value="L-AMINOADIPATE-SEMIALDEHYDE DEHYDROGENASE-PHOSPHOPANTETHEINYL TRANSFERASE"/>
    <property type="match status" value="1"/>
</dbReference>
<dbReference type="PANTHER" id="PTHR12215">
    <property type="entry name" value="PHOSPHOPANTETHEINE TRANSFERASE"/>
    <property type="match status" value="1"/>
</dbReference>
<dbReference type="Pfam" id="PF01648">
    <property type="entry name" value="ACPS"/>
    <property type="match status" value="1"/>
</dbReference>
<dbReference type="SUPFAM" id="SSF56214">
    <property type="entry name" value="4'-phosphopantetheinyl transferase"/>
    <property type="match status" value="2"/>
</dbReference>
<comment type="function">
    <text evidence="1 2">May be involved in an alternative pathway for phosphopantetheinyl transfer and holo-ACP synthesis in E.coli. The native apo-protein substrate is unknown. Is able to functionally replace AcpS in vivo but only when expressed at high levels.</text>
</comment>
<comment type="catalytic activity">
    <reaction evidence="5">
        <text>apo-[ACP] + CoA = holo-[ACP] + adenosine 3',5'-bisphosphate + H(+)</text>
        <dbReference type="Rhea" id="RHEA:12068"/>
        <dbReference type="Rhea" id="RHEA-COMP:9685"/>
        <dbReference type="Rhea" id="RHEA-COMP:9690"/>
        <dbReference type="ChEBI" id="CHEBI:15378"/>
        <dbReference type="ChEBI" id="CHEBI:29999"/>
        <dbReference type="ChEBI" id="CHEBI:57287"/>
        <dbReference type="ChEBI" id="CHEBI:58343"/>
        <dbReference type="ChEBI" id="CHEBI:64479"/>
        <dbReference type="EC" id="2.7.8.7"/>
    </reaction>
</comment>
<comment type="similarity">
    <text evidence="4">Belongs to the P-Pant transferase superfamily. Gsp/Sfp/HetI/AcpT family.</text>
</comment>